<organism>
    <name type="scientific">Streptococcus pneumoniae (strain 70585)</name>
    <dbReference type="NCBI Taxonomy" id="488221"/>
    <lineage>
        <taxon>Bacteria</taxon>
        <taxon>Bacillati</taxon>
        <taxon>Bacillota</taxon>
        <taxon>Bacilli</taxon>
        <taxon>Lactobacillales</taxon>
        <taxon>Streptococcaceae</taxon>
        <taxon>Streptococcus</taxon>
    </lineage>
</organism>
<evidence type="ECO:0000255" key="1">
    <source>
        <dbReference type="HAMAP-Rule" id="MF_00139"/>
    </source>
</evidence>
<evidence type="ECO:0000255" key="2">
    <source>
        <dbReference type="PROSITE-ProRule" id="PRU01202"/>
    </source>
</evidence>
<accession>C1C9V4</accession>
<name>PUR9_STRP7</name>
<dbReference type="EC" id="2.1.2.3" evidence="1"/>
<dbReference type="EC" id="3.5.4.10" evidence="1"/>
<dbReference type="EMBL" id="CP000918">
    <property type="protein sequence ID" value="ACO16793.1"/>
    <property type="molecule type" value="Genomic_DNA"/>
</dbReference>
<dbReference type="RefSeq" id="WP_000167092.1">
    <property type="nucleotide sequence ID" value="NC_012468.1"/>
</dbReference>
<dbReference type="SMR" id="C1C9V4"/>
<dbReference type="KEGG" id="snm:SP70585_0117"/>
<dbReference type="HOGENOM" id="CLU_016316_5_2_9"/>
<dbReference type="UniPathway" id="UPA00074">
    <property type="reaction ID" value="UER00133"/>
</dbReference>
<dbReference type="UniPathway" id="UPA00074">
    <property type="reaction ID" value="UER00135"/>
</dbReference>
<dbReference type="Proteomes" id="UP000002211">
    <property type="component" value="Chromosome"/>
</dbReference>
<dbReference type="GO" id="GO:0005829">
    <property type="term" value="C:cytosol"/>
    <property type="evidence" value="ECO:0007669"/>
    <property type="project" value="TreeGrafter"/>
</dbReference>
<dbReference type="GO" id="GO:0003937">
    <property type="term" value="F:IMP cyclohydrolase activity"/>
    <property type="evidence" value="ECO:0007669"/>
    <property type="project" value="UniProtKB-UniRule"/>
</dbReference>
<dbReference type="GO" id="GO:0004643">
    <property type="term" value="F:phosphoribosylaminoimidazolecarboxamide formyltransferase activity"/>
    <property type="evidence" value="ECO:0007669"/>
    <property type="project" value="UniProtKB-UniRule"/>
</dbReference>
<dbReference type="GO" id="GO:0006189">
    <property type="term" value="P:'de novo' IMP biosynthetic process"/>
    <property type="evidence" value="ECO:0007669"/>
    <property type="project" value="UniProtKB-UniRule"/>
</dbReference>
<dbReference type="CDD" id="cd01421">
    <property type="entry name" value="IMPCH"/>
    <property type="match status" value="1"/>
</dbReference>
<dbReference type="FunFam" id="3.40.140.20:FF:000001">
    <property type="entry name" value="Bifunctional purine biosynthesis protein PurH"/>
    <property type="match status" value="1"/>
</dbReference>
<dbReference type="FunFam" id="3.40.140.20:FF:000002">
    <property type="entry name" value="Bifunctional purine biosynthesis protein PurH"/>
    <property type="match status" value="1"/>
</dbReference>
<dbReference type="FunFam" id="3.40.50.1380:FF:000001">
    <property type="entry name" value="Bifunctional purine biosynthesis protein PurH"/>
    <property type="match status" value="1"/>
</dbReference>
<dbReference type="Gene3D" id="3.40.140.20">
    <property type="match status" value="2"/>
</dbReference>
<dbReference type="Gene3D" id="3.40.50.1380">
    <property type="entry name" value="Methylglyoxal synthase-like domain"/>
    <property type="match status" value="1"/>
</dbReference>
<dbReference type="HAMAP" id="MF_00139">
    <property type="entry name" value="PurH"/>
    <property type="match status" value="1"/>
</dbReference>
<dbReference type="InterPro" id="IPR024051">
    <property type="entry name" value="AICAR_Tfase_dup_dom_sf"/>
</dbReference>
<dbReference type="InterPro" id="IPR016193">
    <property type="entry name" value="Cytidine_deaminase-like"/>
</dbReference>
<dbReference type="InterPro" id="IPR011607">
    <property type="entry name" value="MGS-like_dom"/>
</dbReference>
<dbReference type="InterPro" id="IPR036914">
    <property type="entry name" value="MGS-like_dom_sf"/>
</dbReference>
<dbReference type="InterPro" id="IPR002695">
    <property type="entry name" value="PurH-like"/>
</dbReference>
<dbReference type="NCBIfam" id="NF002049">
    <property type="entry name" value="PRK00881.1"/>
    <property type="match status" value="1"/>
</dbReference>
<dbReference type="NCBIfam" id="TIGR00355">
    <property type="entry name" value="purH"/>
    <property type="match status" value="1"/>
</dbReference>
<dbReference type="PANTHER" id="PTHR11692:SF0">
    <property type="entry name" value="BIFUNCTIONAL PURINE BIOSYNTHESIS PROTEIN ATIC"/>
    <property type="match status" value="1"/>
</dbReference>
<dbReference type="PANTHER" id="PTHR11692">
    <property type="entry name" value="BIFUNCTIONAL PURINE BIOSYNTHESIS PROTEIN PURH"/>
    <property type="match status" value="1"/>
</dbReference>
<dbReference type="Pfam" id="PF01808">
    <property type="entry name" value="AICARFT_IMPCHas"/>
    <property type="match status" value="1"/>
</dbReference>
<dbReference type="Pfam" id="PF02142">
    <property type="entry name" value="MGS"/>
    <property type="match status" value="1"/>
</dbReference>
<dbReference type="PIRSF" id="PIRSF000414">
    <property type="entry name" value="AICARFT_IMPCHas"/>
    <property type="match status" value="1"/>
</dbReference>
<dbReference type="SMART" id="SM00798">
    <property type="entry name" value="AICARFT_IMPCHas"/>
    <property type="match status" value="1"/>
</dbReference>
<dbReference type="SMART" id="SM00851">
    <property type="entry name" value="MGS"/>
    <property type="match status" value="1"/>
</dbReference>
<dbReference type="SUPFAM" id="SSF53927">
    <property type="entry name" value="Cytidine deaminase-like"/>
    <property type="match status" value="1"/>
</dbReference>
<dbReference type="SUPFAM" id="SSF52335">
    <property type="entry name" value="Methylglyoxal synthase-like"/>
    <property type="match status" value="1"/>
</dbReference>
<dbReference type="PROSITE" id="PS51855">
    <property type="entry name" value="MGS"/>
    <property type="match status" value="1"/>
</dbReference>
<gene>
    <name evidence="1" type="primary">purH</name>
    <name type="ordered locus">SP70585_0117</name>
</gene>
<sequence>MTKRVLISVSDKAGIVEFAQELKKLGWEIISTGGTKVALDNAGVDTIAIDDVTGFPEMMDGRVKTLHPNIHGGLLARRDLDSHLEAVKDNKIELIDLVVVNLYPFKETILKPDVTYADAVENIDIGGPSMLRSAAKNHASVTVVVDPADYAVVLDELAANGETSYETRQRLAAKVFRHTAAYDALIAEYFTAQVGESKPEKLTLTYDLKQPMRYGENPQQDADFYQKALPTDYSIASAKQLNGKELSFNNIRDADAAIRIIRDFKDSPTVVALKHMNPCGIGQADDIETAWDYAYESDPVSIFGGIVVLNREVDAATAEKMHGVFLEIIIAPSYTDEALAILINKKKNLRILALPFNAQEASEVEAEYTGVVGGLLVQNQDVVKESPADWQVVTKRQPTETEATALEFAWKAIKYVKSNGIIVTNDHMTLGVGPGQTNRVASVRLAIDQAKDRLNGAVLASDAFFPFADNVEEIAKAGIKAIIQPGGSVRDQESIEAADKYGLTMVFTGVRHFRH</sequence>
<comment type="catalytic activity">
    <reaction evidence="1">
        <text>(6R)-10-formyltetrahydrofolate + 5-amino-1-(5-phospho-beta-D-ribosyl)imidazole-4-carboxamide = 5-formamido-1-(5-phospho-D-ribosyl)imidazole-4-carboxamide + (6S)-5,6,7,8-tetrahydrofolate</text>
        <dbReference type="Rhea" id="RHEA:22192"/>
        <dbReference type="ChEBI" id="CHEBI:57453"/>
        <dbReference type="ChEBI" id="CHEBI:58467"/>
        <dbReference type="ChEBI" id="CHEBI:58475"/>
        <dbReference type="ChEBI" id="CHEBI:195366"/>
        <dbReference type="EC" id="2.1.2.3"/>
    </reaction>
</comment>
<comment type="catalytic activity">
    <reaction evidence="1">
        <text>IMP + H2O = 5-formamido-1-(5-phospho-D-ribosyl)imidazole-4-carboxamide</text>
        <dbReference type="Rhea" id="RHEA:18445"/>
        <dbReference type="ChEBI" id="CHEBI:15377"/>
        <dbReference type="ChEBI" id="CHEBI:58053"/>
        <dbReference type="ChEBI" id="CHEBI:58467"/>
        <dbReference type="EC" id="3.5.4.10"/>
    </reaction>
</comment>
<comment type="pathway">
    <text evidence="1">Purine metabolism; IMP biosynthesis via de novo pathway; 5-formamido-1-(5-phospho-D-ribosyl)imidazole-4-carboxamide from 5-amino-1-(5-phospho-D-ribosyl)imidazole-4-carboxamide (10-formyl THF route): step 1/1.</text>
</comment>
<comment type="pathway">
    <text evidence="1">Purine metabolism; IMP biosynthesis via de novo pathway; IMP from 5-formamido-1-(5-phospho-D-ribosyl)imidazole-4-carboxamide: step 1/1.</text>
</comment>
<comment type="domain">
    <text evidence="1">The IMP cyclohydrolase activity resides in the N-terminal region.</text>
</comment>
<comment type="similarity">
    <text evidence="1">Belongs to the PurH family.</text>
</comment>
<protein>
    <recommendedName>
        <fullName evidence="1">Bifunctional purine biosynthesis protein PurH</fullName>
    </recommendedName>
    <domain>
        <recommendedName>
            <fullName evidence="1">Phosphoribosylaminoimidazolecarboxamide formyltransferase</fullName>
            <ecNumber evidence="1">2.1.2.3</ecNumber>
        </recommendedName>
        <alternativeName>
            <fullName evidence="1">AICAR transformylase</fullName>
        </alternativeName>
    </domain>
    <domain>
        <recommendedName>
            <fullName evidence="1">IMP cyclohydrolase</fullName>
            <ecNumber evidence="1">3.5.4.10</ecNumber>
        </recommendedName>
        <alternativeName>
            <fullName evidence="1">ATIC</fullName>
        </alternativeName>
        <alternativeName>
            <fullName evidence="1">IMP synthase</fullName>
        </alternativeName>
        <alternativeName>
            <fullName evidence="1">Inosinicase</fullName>
        </alternativeName>
    </domain>
</protein>
<feature type="chain" id="PRO_1000122973" description="Bifunctional purine biosynthesis protein PurH">
    <location>
        <begin position="1"/>
        <end position="515"/>
    </location>
</feature>
<feature type="domain" description="MGS-like" evidence="2">
    <location>
        <begin position="1"/>
        <end position="145"/>
    </location>
</feature>
<keyword id="KW-0378">Hydrolase</keyword>
<keyword id="KW-0511">Multifunctional enzyme</keyword>
<keyword id="KW-0658">Purine biosynthesis</keyword>
<keyword id="KW-0808">Transferase</keyword>
<proteinExistence type="inferred from homology"/>
<reference key="1">
    <citation type="journal article" date="2010" name="Genome Biol.">
        <title>Structure and dynamics of the pan-genome of Streptococcus pneumoniae and closely related species.</title>
        <authorList>
            <person name="Donati C."/>
            <person name="Hiller N.L."/>
            <person name="Tettelin H."/>
            <person name="Muzzi A."/>
            <person name="Croucher N.J."/>
            <person name="Angiuoli S.V."/>
            <person name="Oggioni M."/>
            <person name="Dunning Hotopp J.C."/>
            <person name="Hu F.Z."/>
            <person name="Riley D.R."/>
            <person name="Covacci A."/>
            <person name="Mitchell T.J."/>
            <person name="Bentley S.D."/>
            <person name="Kilian M."/>
            <person name="Ehrlich G.D."/>
            <person name="Rappuoli R."/>
            <person name="Moxon E.R."/>
            <person name="Masignani V."/>
        </authorList>
    </citation>
    <scope>NUCLEOTIDE SEQUENCE [LARGE SCALE GENOMIC DNA]</scope>
    <source>
        <strain>70585</strain>
    </source>
</reference>